<gene>
    <name evidence="1" type="primary">panC</name>
    <name type="ordered locus">HNE_1126</name>
</gene>
<organism>
    <name type="scientific">Hyphomonas neptunium (strain ATCC 15444)</name>
    <dbReference type="NCBI Taxonomy" id="228405"/>
    <lineage>
        <taxon>Bacteria</taxon>
        <taxon>Pseudomonadati</taxon>
        <taxon>Pseudomonadota</taxon>
        <taxon>Alphaproteobacteria</taxon>
        <taxon>Hyphomonadales</taxon>
        <taxon>Hyphomonadaceae</taxon>
        <taxon>Hyphomonas</taxon>
    </lineage>
</organism>
<feature type="chain" id="PRO_0000305467" description="Pantothenate synthetase">
    <location>
        <begin position="1"/>
        <end position="293"/>
    </location>
</feature>
<feature type="active site" description="Proton donor" evidence="1">
    <location>
        <position position="45"/>
    </location>
</feature>
<feature type="binding site" evidence="1">
    <location>
        <begin position="38"/>
        <end position="45"/>
    </location>
    <ligand>
        <name>ATP</name>
        <dbReference type="ChEBI" id="CHEBI:30616"/>
    </ligand>
</feature>
<feature type="binding site" evidence="1">
    <location>
        <position position="69"/>
    </location>
    <ligand>
        <name>(R)-pantoate</name>
        <dbReference type="ChEBI" id="CHEBI:15980"/>
    </ligand>
</feature>
<feature type="binding site" evidence="1">
    <location>
        <position position="69"/>
    </location>
    <ligand>
        <name>beta-alanine</name>
        <dbReference type="ChEBI" id="CHEBI:57966"/>
    </ligand>
</feature>
<feature type="binding site" evidence="1">
    <location>
        <begin position="155"/>
        <end position="158"/>
    </location>
    <ligand>
        <name>ATP</name>
        <dbReference type="ChEBI" id="CHEBI:30616"/>
    </ligand>
</feature>
<feature type="binding site" evidence="1">
    <location>
        <position position="161"/>
    </location>
    <ligand>
        <name>(R)-pantoate</name>
        <dbReference type="ChEBI" id="CHEBI:15980"/>
    </ligand>
</feature>
<feature type="binding site" evidence="1">
    <location>
        <begin position="192"/>
        <end position="195"/>
    </location>
    <ligand>
        <name>ATP</name>
        <dbReference type="ChEBI" id="CHEBI:30616"/>
    </ligand>
</feature>
<reference key="1">
    <citation type="journal article" date="2006" name="J. Bacteriol.">
        <title>Comparative genomic evidence for a close relationship between the dimorphic prosthecate bacteria Hyphomonas neptunium and Caulobacter crescentus.</title>
        <authorList>
            <person name="Badger J.H."/>
            <person name="Hoover T.R."/>
            <person name="Brun Y.V."/>
            <person name="Weiner R.M."/>
            <person name="Laub M.T."/>
            <person name="Alexandre G."/>
            <person name="Mrazek J."/>
            <person name="Ren Q."/>
            <person name="Paulsen I.T."/>
            <person name="Nelson K.E."/>
            <person name="Khouri H.M."/>
            <person name="Radune D."/>
            <person name="Sosa J."/>
            <person name="Dodson R.J."/>
            <person name="Sullivan S.A."/>
            <person name="Rosovitz M.J."/>
            <person name="Madupu R."/>
            <person name="Brinkac L.M."/>
            <person name="Durkin A.S."/>
            <person name="Daugherty S.C."/>
            <person name="Kothari S.P."/>
            <person name="Giglio M.G."/>
            <person name="Zhou L."/>
            <person name="Haft D.H."/>
            <person name="Selengut J.D."/>
            <person name="Davidsen T.M."/>
            <person name="Yang Q."/>
            <person name="Zafar N."/>
            <person name="Ward N.L."/>
        </authorList>
    </citation>
    <scope>NUCLEOTIDE SEQUENCE [LARGE SCALE GENOMIC DNA]</scope>
    <source>
        <strain>ATCC 15444</strain>
    </source>
</reference>
<comment type="function">
    <text evidence="1">Catalyzes the condensation of pantoate with beta-alanine in an ATP-dependent reaction via a pantoyl-adenylate intermediate.</text>
</comment>
<comment type="catalytic activity">
    <reaction evidence="1">
        <text>(R)-pantoate + beta-alanine + ATP = (R)-pantothenate + AMP + diphosphate + H(+)</text>
        <dbReference type="Rhea" id="RHEA:10912"/>
        <dbReference type="ChEBI" id="CHEBI:15378"/>
        <dbReference type="ChEBI" id="CHEBI:15980"/>
        <dbReference type="ChEBI" id="CHEBI:29032"/>
        <dbReference type="ChEBI" id="CHEBI:30616"/>
        <dbReference type="ChEBI" id="CHEBI:33019"/>
        <dbReference type="ChEBI" id="CHEBI:57966"/>
        <dbReference type="ChEBI" id="CHEBI:456215"/>
        <dbReference type="EC" id="6.3.2.1"/>
    </reaction>
</comment>
<comment type="pathway">
    <text evidence="1">Cofactor biosynthesis; (R)-pantothenate biosynthesis; (R)-pantothenate from (R)-pantoate and beta-alanine: step 1/1.</text>
</comment>
<comment type="subunit">
    <text evidence="1">Homodimer.</text>
</comment>
<comment type="subcellular location">
    <subcellularLocation>
        <location evidence="1">Cytoplasm</location>
    </subcellularLocation>
</comment>
<comment type="miscellaneous">
    <text evidence="1">The reaction proceeds by a bi uni uni bi ping pong mechanism.</text>
</comment>
<comment type="similarity">
    <text evidence="1">Belongs to the pantothenate synthetase family.</text>
</comment>
<name>PANC_HYPNA</name>
<sequence>MNSTKENPVEIIRTRNELQARVRAWKQAGETVGFVPTMGALHEGHLSLIEKAQEKVTRTVASIFVNPAQFAPGEDFDTYPRREGEDIAKLASVNCDAVYLPTVAEMYPEGSVTNVRVESLSDLLDGIYRPHFFYGVATVVARLFLHAQPDVAVFGEKDYQQLQVIRRMVRDLGFPIEIIGGATRRDADGLAQSSRNLYLSPDERRAAGAIYSAMHRAASRMALGTLPSEALKEAEGYILTAGFRKIDYVTLVDPATLQALPADTPLEDGAAARLLAAAWIGKTRLIDNISVTR</sequence>
<proteinExistence type="inferred from homology"/>
<dbReference type="EC" id="6.3.2.1" evidence="1"/>
<dbReference type="EMBL" id="CP000158">
    <property type="protein sequence ID" value="ABI76807.1"/>
    <property type="molecule type" value="Genomic_DNA"/>
</dbReference>
<dbReference type="RefSeq" id="WP_011646146.1">
    <property type="nucleotide sequence ID" value="NC_008358.1"/>
</dbReference>
<dbReference type="SMR" id="Q0C347"/>
<dbReference type="STRING" id="228405.HNE_1126"/>
<dbReference type="KEGG" id="hne:HNE_1126"/>
<dbReference type="eggNOG" id="COG0414">
    <property type="taxonomic scope" value="Bacteria"/>
</dbReference>
<dbReference type="HOGENOM" id="CLU_047148_0_0_5"/>
<dbReference type="UniPathway" id="UPA00028">
    <property type="reaction ID" value="UER00005"/>
</dbReference>
<dbReference type="Proteomes" id="UP000001959">
    <property type="component" value="Chromosome"/>
</dbReference>
<dbReference type="GO" id="GO:0005829">
    <property type="term" value="C:cytosol"/>
    <property type="evidence" value="ECO:0007669"/>
    <property type="project" value="TreeGrafter"/>
</dbReference>
<dbReference type="GO" id="GO:0005524">
    <property type="term" value="F:ATP binding"/>
    <property type="evidence" value="ECO:0007669"/>
    <property type="project" value="UniProtKB-KW"/>
</dbReference>
<dbReference type="GO" id="GO:0004592">
    <property type="term" value="F:pantoate-beta-alanine ligase activity"/>
    <property type="evidence" value="ECO:0007669"/>
    <property type="project" value="UniProtKB-UniRule"/>
</dbReference>
<dbReference type="GO" id="GO:0015940">
    <property type="term" value="P:pantothenate biosynthetic process"/>
    <property type="evidence" value="ECO:0007669"/>
    <property type="project" value="UniProtKB-UniRule"/>
</dbReference>
<dbReference type="CDD" id="cd00560">
    <property type="entry name" value="PanC"/>
    <property type="match status" value="1"/>
</dbReference>
<dbReference type="Gene3D" id="3.40.50.620">
    <property type="entry name" value="HUPs"/>
    <property type="match status" value="1"/>
</dbReference>
<dbReference type="Gene3D" id="3.30.1300.10">
    <property type="entry name" value="Pantoate-beta-alanine ligase, C-terminal domain"/>
    <property type="match status" value="1"/>
</dbReference>
<dbReference type="HAMAP" id="MF_00158">
    <property type="entry name" value="PanC"/>
    <property type="match status" value="1"/>
</dbReference>
<dbReference type="InterPro" id="IPR004821">
    <property type="entry name" value="Cyt_trans-like"/>
</dbReference>
<dbReference type="InterPro" id="IPR003721">
    <property type="entry name" value="Pantoate_ligase"/>
</dbReference>
<dbReference type="InterPro" id="IPR042176">
    <property type="entry name" value="Pantoate_ligase_C"/>
</dbReference>
<dbReference type="InterPro" id="IPR014729">
    <property type="entry name" value="Rossmann-like_a/b/a_fold"/>
</dbReference>
<dbReference type="NCBIfam" id="TIGR00125">
    <property type="entry name" value="cyt_tran_rel"/>
    <property type="match status" value="1"/>
</dbReference>
<dbReference type="NCBIfam" id="TIGR00018">
    <property type="entry name" value="panC"/>
    <property type="match status" value="1"/>
</dbReference>
<dbReference type="PANTHER" id="PTHR21299">
    <property type="entry name" value="CYTIDYLATE KINASE/PANTOATE-BETA-ALANINE LIGASE"/>
    <property type="match status" value="1"/>
</dbReference>
<dbReference type="PANTHER" id="PTHR21299:SF1">
    <property type="entry name" value="PANTOATE--BETA-ALANINE LIGASE"/>
    <property type="match status" value="1"/>
</dbReference>
<dbReference type="Pfam" id="PF02569">
    <property type="entry name" value="Pantoate_ligase"/>
    <property type="match status" value="1"/>
</dbReference>
<dbReference type="SUPFAM" id="SSF52374">
    <property type="entry name" value="Nucleotidylyl transferase"/>
    <property type="match status" value="1"/>
</dbReference>
<keyword id="KW-0067">ATP-binding</keyword>
<keyword id="KW-0963">Cytoplasm</keyword>
<keyword id="KW-0436">Ligase</keyword>
<keyword id="KW-0547">Nucleotide-binding</keyword>
<keyword id="KW-0566">Pantothenate biosynthesis</keyword>
<keyword id="KW-1185">Reference proteome</keyword>
<protein>
    <recommendedName>
        <fullName evidence="1">Pantothenate synthetase</fullName>
        <shortName evidence="1">PS</shortName>
        <ecNumber evidence="1">6.3.2.1</ecNumber>
    </recommendedName>
    <alternativeName>
        <fullName evidence="1">Pantoate--beta-alanine ligase</fullName>
    </alternativeName>
    <alternativeName>
        <fullName evidence="1">Pantoate-activating enzyme</fullName>
    </alternativeName>
</protein>
<accession>Q0C347</accession>
<evidence type="ECO:0000255" key="1">
    <source>
        <dbReference type="HAMAP-Rule" id="MF_00158"/>
    </source>
</evidence>